<keyword id="KW-0002">3D-structure</keyword>
<keyword id="KW-0165">Cleavage on pair of basic residues</keyword>
<keyword id="KW-0175">Coiled coil</keyword>
<keyword id="KW-1015">Disulfide bond</keyword>
<keyword id="KW-1169">Fusion of virus membrane with host cell membrane</keyword>
<keyword id="KW-1168">Fusion of virus membrane with host membrane</keyword>
<keyword id="KW-0325">Glycoprotein</keyword>
<keyword id="KW-1032">Host cell membrane</keyword>
<keyword id="KW-1043">Host membrane</keyword>
<keyword id="KW-0472">Membrane</keyword>
<keyword id="KW-1185">Reference proteome</keyword>
<keyword id="KW-0732">Signal</keyword>
<keyword id="KW-0812">Transmembrane</keyword>
<keyword id="KW-1133">Transmembrane helix</keyword>
<keyword id="KW-0261">Viral envelope protein</keyword>
<keyword id="KW-1162">Viral penetration into host cytoplasm</keyword>
<keyword id="KW-0946">Virion</keyword>
<keyword id="KW-1160">Virus entry into host cell</keyword>
<accession>Q786F3</accession>
<reference key="1">
    <citation type="journal article" date="2000" name="Virus Genes">
        <title>Comparative nucleotide sequence analyses of the entire genomes of B95a cell-isolated and vero cell-isolated measles viruses from the same patient.</title>
        <authorList>
            <person name="Takeuchi K."/>
            <person name="Miyajima N."/>
            <person name="Kobune F."/>
            <person name="Tashiro M."/>
        </authorList>
    </citation>
    <scope>NUCLEOTIDE SEQUENCE [GENOMIC RNA]</scope>
</reference>
<reference key="2">
    <citation type="journal article" date="1995" name="J. Virol.">
        <title>Engineered serine protease inhibitor prevents furin-catalyzed activation of the fusion glycoprotein and production of infectious measles virus.</title>
        <authorList>
            <person name="Watanabe M."/>
            <person name="Hirano A."/>
            <person name="Stenglein S."/>
            <person name="Nelson J."/>
            <person name="Thomas G."/>
            <person name="Wong T.C."/>
        </authorList>
    </citation>
    <scope>PROTEOLYTIC CLEAVAGE BY HOST FURIN</scope>
    <source>
        <strain>Nagahata</strain>
    </source>
</reference>
<reference key="3">
    <citation type="journal article" date="2012" name="J. Biol. Chem.">
        <title>Base of the measles virus fusion trimer head receives the signal that triggers membrane fusion.</title>
        <authorList>
            <person name="Apte-Sengupta S."/>
            <person name="Negi S."/>
            <person name="Leonard V.H."/>
            <person name="Oezguen N."/>
            <person name="Navaratnarajah C.K."/>
            <person name="Braun W."/>
            <person name="Cattaneo R."/>
        </authorList>
    </citation>
    <scope>MUTAGENESIS OF TRP-311; LEU-325; LEU-348; TYR-349; LEU-354; ARG-360; ILE-393; ASP-418 AND TYR-437</scope>
    <scope>FUNCTION</scope>
</reference>
<reference key="4">
    <citation type="journal article" date="2012" name="Proc. Natl. Acad. Sci. U.S.A.">
        <title>Triggering the measles virus membrane fusion machinery.</title>
        <authorList>
            <person name="Brindley M.A."/>
            <person name="Takeda M."/>
            <person name="Plattet P."/>
            <person name="Plemper R.K."/>
        </authorList>
    </citation>
    <scope>FUNCTION</scope>
</reference>
<reference key="5">
    <citation type="journal article" date="2015" name="MBio">
        <title>Measles fusion machinery is dysregulated in neuropathogenic variants.</title>
        <authorList>
            <person name="Jurgens E.M."/>
            <person name="Mathieu C."/>
            <person name="Palermo L.M."/>
            <person name="Hardie D."/>
            <person name="Horvat B."/>
            <person name="Moscona A."/>
            <person name="Porotto M."/>
        </authorList>
    </citation>
    <scope>VARIANT TRP-454</scope>
</reference>
<reference key="6">
    <citation type="journal article" date="2018" name="J. Virol.">
        <title>Cell-to-Cell Measles Virus Spread between Human Neurons Is Dependent on Hemagglutinin and Hyperfusogenic Fusion Protein.</title>
        <authorList>
            <person name="Sato Y."/>
            <person name="Watanabe S."/>
            <person name="Fukuda Y."/>
            <person name="Hashiguchi T."/>
            <person name="Yanagi Y."/>
            <person name="Ohno S."/>
        </authorList>
    </citation>
    <scope>FUNCTION</scope>
</reference>
<reference key="7">
    <citation type="journal article" date="2021" name="Proc. Natl. Acad. Sci. U.S.A.">
        <title>Fitness selection of hyperfusogenic measles virus F proteins associated with neuropathogenic phenotypes.</title>
        <authorList>
            <person name="Ikegame S."/>
            <person name="Hashiguchi T."/>
            <person name="Hung C.T."/>
            <person name="Dobrindt K."/>
            <person name="Brennand K.J."/>
            <person name="Takeda M."/>
            <person name="Lee B."/>
        </authorList>
    </citation>
    <scope>DOMAIN</scope>
    <scope>VARIANTS PHE-137; HIS-137; ASN-262; PRO-354; LYS-462; TRP-464 AND SER-465</scope>
    <scope>FUNCTION</scope>
</reference>
<reference evidence="12 13 14" key="8">
    <citation type="journal article" date="2018" name="Proc. Natl. Acad. Sci. U.S.A.">
        <title>Structures of the prefusion form of measles virus fusion protein in complex with inhibitors.</title>
        <authorList>
            <person name="Hashiguchi T."/>
            <person name="Fukuda Y."/>
            <person name="Matsuoka R."/>
            <person name="Kuroda D."/>
            <person name="Kubota M."/>
            <person name="Shirogane Y."/>
            <person name="Watanabe S."/>
            <person name="Tsumoto K."/>
            <person name="Kohda D."/>
            <person name="Plemper R.K."/>
            <person name="Yanagi Y."/>
        </authorList>
    </citation>
    <scope>X-RAY CRYSTALLOGRAPHY (2.33 ANGSTROMS) OF 20-494</scope>
    <scope>DISULFIDE BONDS</scope>
    <scope>GLYCOSYLATION AT ASN-29 AND ASN-61</scope>
    <scope>VARIANTS THR-87; VAL-94; ARG-262; MET-354; TRP-461; LYS-462 AND LYS-465</scope>
    <scope>FUNCTION</scope>
    <scope>SUBUNIT</scope>
</reference>
<reference evidence="15 16 17 18 19" key="9">
    <citation type="journal article" date="2024" name="Science">
        <title>A neutralizing antibody prevents postfusion transition of measles virus fusion protein.</title>
        <authorList>
            <person name="Zyla D.S."/>
            <person name="Della Marca R."/>
            <person name="Niemeyer G."/>
            <person name="Zipursky G."/>
            <person name="Stearns K."/>
            <person name="Leedale C."/>
            <person name="Sobolik E.B."/>
            <person name="Callaway H.M."/>
            <person name="Hariharan C."/>
            <person name="Peng W."/>
            <person name="Parekh D."/>
            <person name="Marcink T.C."/>
            <person name="Diaz Avalos R."/>
            <person name="Horvat B."/>
            <person name="Mathieu C."/>
            <person name="Snijder J."/>
            <person name="Greninger A.L."/>
            <person name="Hastie K.M."/>
            <person name="Niewiesk S."/>
            <person name="Moscona A."/>
            <person name="Porotto M."/>
            <person name="Ollmann Saphire E."/>
        </authorList>
    </citation>
    <scope>STRUCTURE BY ELECTRON MICROSCOPY (2.11 ANGSTROMS) OF 1-112 AND 113-495</scope>
    <scope>DISULFIDE BONDS</scope>
</reference>
<name>FUS_MEASC</name>
<feature type="signal peptide" evidence="2">
    <location>
        <begin position="1"/>
        <end position="23"/>
    </location>
</feature>
<feature type="chain" id="PRO_0000394714" description="Fusion glycoprotein F0">
    <location>
        <begin position="24"/>
        <end position="550"/>
    </location>
</feature>
<feature type="chain" id="PRO_0000394715" description="Fusion glycoprotein F2">
    <location>
        <begin position="24"/>
        <end position="112"/>
    </location>
</feature>
<feature type="chain" id="PRO_0000394716" description="Fusion glycoprotein F1">
    <location>
        <begin position="113"/>
        <end position="550"/>
    </location>
</feature>
<feature type="topological domain" description="Extracellular" evidence="1">
    <location>
        <begin position="24"/>
        <end position="487"/>
    </location>
</feature>
<feature type="transmembrane region" description="Helical" evidence="2">
    <location>
        <begin position="488"/>
        <end position="518"/>
    </location>
</feature>
<feature type="topological domain" description="Cytoplasmic" evidence="1">
    <location>
        <begin position="519"/>
        <end position="550"/>
    </location>
</feature>
<feature type="region of interest" description="HRC" evidence="7">
    <location>
        <begin position="69"/>
        <end position="95"/>
    </location>
</feature>
<feature type="region of interest" description="Fusion peptide" evidence="7">
    <location>
        <begin position="113"/>
        <end position="138"/>
    </location>
</feature>
<feature type="region of interest" description="HRA" evidence="7">
    <location>
        <begin position="139"/>
        <end position="215"/>
    </location>
</feature>
<feature type="region of interest" description="Interaction with hemagglutinin" evidence="7">
    <location>
        <begin position="367"/>
        <end position="444"/>
    </location>
</feature>
<feature type="region of interest" description="HRB" evidence="7">
    <location>
        <begin position="445"/>
        <end position="494"/>
    </location>
</feature>
<feature type="coiled-coil region" evidence="2">
    <location>
        <begin position="138"/>
        <end position="166"/>
    </location>
</feature>
<feature type="coiled-coil region" evidence="2">
    <location>
        <begin position="462"/>
        <end position="487"/>
    </location>
</feature>
<feature type="site" description="Cleavage; by host Furin" evidence="1">
    <location>
        <begin position="112"/>
        <end position="113"/>
    </location>
</feature>
<feature type="glycosylation site" description="N-linked (GlcNAc...) asparagine; by host" evidence="6 12 13 14">
    <location>
        <position position="29"/>
    </location>
</feature>
<feature type="glycosylation site" description="N-linked (GlcNAc...) asparagine; by host" evidence="6 12 13 14">
    <location>
        <position position="61"/>
    </location>
</feature>
<feature type="disulfide bond" description="Interchain (with C-195)" evidence="12 13 14 15 16 17 18">
    <location>
        <position position="68"/>
    </location>
</feature>
<feature type="disulfide bond" description="Interchain (with C-68)" evidence="12 13 14 15 16 17 18">
    <location>
        <position position="195"/>
    </location>
</feature>
<feature type="disulfide bond" evidence="6 8 12 13 14 15 16 17 18 19">
    <location>
        <begin position="334"/>
        <end position="343"/>
    </location>
</feature>
<feature type="disulfide bond" evidence="6 8 12 13 14 15 16 17 18 19">
    <location>
        <begin position="358"/>
        <end position="366"/>
    </location>
</feature>
<feature type="disulfide bond" evidence="6 8 12 13 14 15 16 17 18 19">
    <location>
        <begin position="390"/>
        <end position="395"/>
    </location>
</feature>
<feature type="disulfide bond" evidence="6 8 12 13 14 15 16 17 18 19">
    <location>
        <begin position="397"/>
        <end position="420"/>
    </location>
</feature>
<feature type="sequence variant" description="Hyperfusogenic." evidence="6">
    <original>I</original>
    <variation>T</variation>
    <location>
        <position position="87"/>
    </location>
</feature>
<feature type="sequence variant" description="Hyperfusogenic." evidence="6">
    <original>M</original>
    <variation>V</variation>
    <location>
        <position position="94"/>
    </location>
</feature>
<feature type="sequence variant" description="Hyperfusogenic." evidence="7">
    <original>L</original>
    <variation>F</variation>
    <location>
        <position position="137"/>
    </location>
</feature>
<feature type="sequence variant" description="Hyperfusogenic." evidence="7">
    <original>L</original>
    <variation>H</variation>
    <location>
        <position position="137"/>
    </location>
</feature>
<feature type="sequence variant" description="Hyperfusogenic." evidence="7">
    <original>S</original>
    <variation>N</variation>
    <location>
        <position position="262"/>
    </location>
</feature>
<feature type="sequence variant" description="Hyperfusogenic." evidence="6">
    <original>S</original>
    <variation>R</variation>
    <location>
        <position position="262"/>
    </location>
</feature>
<feature type="sequence variant" description="Hyperfusogenic." evidence="6">
    <original>L</original>
    <variation>M</variation>
    <location>
        <position position="354"/>
    </location>
</feature>
<feature type="sequence variant" description="Hyperfusogenic." evidence="7">
    <original>L</original>
    <variation>P</variation>
    <location>
        <position position="354"/>
    </location>
</feature>
<feature type="sequence variant" description="Hyperfusogenic." evidence="6">
    <original>L</original>
    <variation>K</variation>
    <location>
        <position position="454"/>
    </location>
</feature>
<feature type="sequence variant" description="Hyperfusogenic." evidence="5">
    <original>L</original>
    <variation>W</variation>
    <location>
        <position position="454"/>
    </location>
</feature>
<feature type="sequence variant" description="Hyperfusogenic." evidence="6">
    <original>T</original>
    <variation>W</variation>
    <location>
        <position position="461"/>
    </location>
</feature>
<feature type="sequence variant" description="Hyperfusogenic." evidence="6 7">
    <original>N</original>
    <variation>K</variation>
    <location>
        <position position="462"/>
    </location>
</feature>
<feature type="sequence variant" description="Hyperfusogenic." evidence="7">
    <original>G</original>
    <variation>W</variation>
    <location>
        <position position="464"/>
    </location>
</feature>
<feature type="sequence variant" description="Hyperfusogenic." evidence="6 7">
    <original>N</original>
    <variation>K</variation>
    <location>
        <position position="465"/>
    </location>
</feature>
<feature type="sequence variant" description="Hyperfusogenic." evidence="6 7">
    <original>N</original>
    <variation>S</variation>
    <location>
        <position position="465"/>
    </location>
</feature>
<feature type="mutagenesis site" description="Greatly reduced fusion function. Inefficient F0 processing." evidence="3">
    <original>W</original>
    <variation>A</variation>
    <location>
        <position position="311"/>
    </location>
</feature>
<feature type="mutagenesis site" description="Greatly reduced fusion function. No effect on F0 processing." evidence="3">
    <original>L</original>
    <variation>S</variation>
    <location>
        <position position="325"/>
    </location>
</feature>
<feature type="mutagenesis site" description="Greatly reduced fusion function. Inefficient F0 processing." evidence="3">
    <original>L</original>
    <variation>S</variation>
    <location>
        <position position="348"/>
    </location>
</feature>
<feature type="mutagenesis site" description="Greatly reduced fusion function. No effect on F0 processing." evidence="3">
    <original>Y</original>
    <variation>A</variation>
    <location>
        <position position="349"/>
    </location>
</feature>
<feature type="mutagenesis site" description="Greatly reduced fusion function. No effect on F0 processing." evidence="3">
    <original>R</original>
    <variation>A</variation>
    <location>
        <position position="360"/>
    </location>
</feature>
<feature type="mutagenesis site" description="Greatly reduced fusion function. Inefficient F0 processing." evidence="3">
    <original>I</original>
    <variation>S</variation>
    <location>
        <position position="393"/>
    </location>
</feature>
<feature type="mutagenesis site" description="Greatly reduced fusion function. Inefficient F0 processing." evidence="3">
    <original>D</original>
    <variation>A</variation>
    <location>
        <position position="418"/>
    </location>
</feature>
<feature type="mutagenesis site" description="Greatly reduced fusion function. Inefficient F0 processing." evidence="3">
    <original>Y</original>
    <variation>A</variation>
    <location>
        <position position="437"/>
    </location>
</feature>
<feature type="strand" evidence="20">
    <location>
        <begin position="23"/>
        <end position="25"/>
    </location>
</feature>
<feature type="helix" evidence="23">
    <location>
        <begin position="27"/>
        <end position="31"/>
    </location>
</feature>
<feature type="turn" evidence="23">
    <location>
        <begin position="32"/>
        <end position="34"/>
    </location>
</feature>
<feature type="strand" evidence="23">
    <location>
        <begin position="35"/>
        <end position="47"/>
    </location>
</feature>
<feature type="strand" evidence="23">
    <location>
        <begin position="51"/>
        <end position="57"/>
    </location>
</feature>
<feature type="helix" evidence="23">
    <location>
        <begin position="63"/>
        <end position="65"/>
    </location>
</feature>
<feature type="turn" evidence="21">
    <location>
        <begin position="66"/>
        <end position="69"/>
    </location>
</feature>
<feature type="helix" evidence="23">
    <location>
        <begin position="70"/>
        <end position="95"/>
    </location>
</feature>
<feature type="strand" evidence="23">
    <location>
        <begin position="98"/>
        <end position="100"/>
    </location>
</feature>
<feature type="helix" evidence="23">
    <location>
        <begin position="101"/>
        <end position="103"/>
    </location>
</feature>
<feature type="strand" evidence="23">
    <location>
        <begin position="116"/>
        <end position="119"/>
    </location>
</feature>
<feature type="helix" evidence="23">
    <location>
        <begin position="120"/>
        <end position="123"/>
    </location>
</feature>
<feature type="strand" evidence="22">
    <location>
        <begin position="125"/>
        <end position="127"/>
    </location>
</feature>
<feature type="helix" evidence="23">
    <location>
        <begin position="128"/>
        <end position="140"/>
    </location>
</feature>
<feature type="helix" evidence="23">
    <location>
        <begin position="144"/>
        <end position="154"/>
    </location>
</feature>
<feature type="strand" evidence="23">
    <location>
        <begin position="159"/>
        <end position="164"/>
    </location>
</feature>
<feature type="strand" evidence="22">
    <location>
        <begin position="167"/>
        <end position="169"/>
    </location>
</feature>
<feature type="strand" evidence="23">
    <location>
        <begin position="172"/>
        <end position="175"/>
    </location>
</feature>
<feature type="helix" evidence="23">
    <location>
        <begin position="179"/>
        <end position="184"/>
    </location>
</feature>
<feature type="turn" evidence="23">
    <location>
        <begin position="185"/>
        <end position="187"/>
    </location>
</feature>
<feature type="helix" evidence="23">
    <location>
        <begin position="188"/>
        <end position="191"/>
    </location>
</feature>
<feature type="helix" evidence="23">
    <location>
        <begin position="195"/>
        <end position="217"/>
    </location>
</feature>
<feature type="turn" evidence="23">
    <location>
        <begin position="224"/>
        <end position="226"/>
    </location>
</feature>
<feature type="turn" evidence="23">
    <location>
        <begin position="231"/>
        <end position="239"/>
    </location>
</feature>
<feature type="helix" evidence="23">
    <location>
        <begin position="243"/>
        <end position="248"/>
    </location>
</feature>
<feature type="helix" evidence="23">
    <location>
        <begin position="256"/>
        <end position="261"/>
    </location>
</feature>
<feature type="strand" evidence="23">
    <location>
        <begin position="266"/>
        <end position="273"/>
    </location>
</feature>
<feature type="turn" evidence="23">
    <location>
        <begin position="274"/>
        <end position="277"/>
    </location>
</feature>
<feature type="strand" evidence="23">
    <location>
        <begin position="278"/>
        <end position="284"/>
    </location>
</feature>
<feature type="strand" evidence="23">
    <location>
        <begin position="287"/>
        <end position="301"/>
    </location>
</feature>
<feature type="strand" evidence="23">
    <location>
        <begin position="304"/>
        <end position="306"/>
    </location>
</feature>
<feature type="strand" evidence="23">
    <location>
        <begin position="309"/>
        <end position="313"/>
    </location>
</feature>
<feature type="strand" evidence="23">
    <location>
        <begin position="317"/>
        <end position="322"/>
    </location>
</feature>
<feature type="strand" evidence="23">
    <location>
        <begin position="325"/>
        <end position="329"/>
    </location>
</feature>
<feature type="helix" evidence="21">
    <location>
        <begin position="331"/>
        <end position="333"/>
    </location>
</feature>
<feature type="strand" evidence="23">
    <location>
        <begin position="334"/>
        <end position="337"/>
    </location>
</feature>
<feature type="strand" evidence="23">
    <location>
        <begin position="340"/>
        <end position="345"/>
    </location>
</feature>
<feature type="strand" evidence="23">
    <location>
        <begin position="348"/>
        <end position="350"/>
    </location>
</feature>
<feature type="helix" evidence="23">
    <location>
        <begin position="353"/>
        <end position="359"/>
    </location>
</feature>
<feature type="helix" evidence="23">
    <location>
        <begin position="363"/>
        <end position="365"/>
    </location>
</feature>
<feature type="strand" evidence="23">
    <location>
        <begin position="368"/>
        <end position="370"/>
    </location>
</feature>
<feature type="strand" evidence="21">
    <location>
        <begin position="372"/>
        <end position="374"/>
    </location>
</feature>
<feature type="strand" evidence="23">
    <location>
        <begin position="378"/>
        <end position="382"/>
    </location>
</feature>
<feature type="strand" evidence="23">
    <location>
        <begin position="385"/>
        <end position="388"/>
    </location>
</feature>
<feature type="turn" evidence="23">
    <location>
        <begin position="390"/>
        <end position="392"/>
    </location>
</feature>
<feature type="strand" evidence="23">
    <location>
        <begin position="395"/>
        <end position="397"/>
    </location>
</feature>
<feature type="turn" evidence="23">
    <location>
        <begin position="398"/>
        <end position="400"/>
    </location>
</feature>
<feature type="strand" evidence="23">
    <location>
        <begin position="413"/>
        <end position="415"/>
    </location>
</feature>
<feature type="turn" evidence="23">
    <location>
        <begin position="417"/>
        <end position="419"/>
    </location>
</feature>
<feature type="strand" evidence="23">
    <location>
        <begin position="421"/>
        <end position="425"/>
    </location>
</feature>
<feature type="strand" evidence="23">
    <location>
        <begin position="428"/>
        <end position="431"/>
    </location>
</feature>
<feature type="strand" evidence="22">
    <location>
        <begin position="439"/>
        <end position="442"/>
    </location>
</feature>
<feature type="helix" evidence="23">
    <location>
        <begin position="443"/>
        <end position="445"/>
    </location>
</feature>
<feature type="helix" evidence="23">
    <location>
        <begin position="456"/>
        <end position="472"/>
    </location>
</feature>
<feature type="helix" evidence="23">
    <location>
        <begin position="474"/>
        <end position="478"/>
    </location>
</feature>
<feature type="helix" evidence="23">
    <location>
        <begin position="480"/>
        <end position="485"/>
    </location>
</feature>
<sequence>MGLKVNVSAIFMAVLLTLQTPTGQIHWGNLSKIGVVGIGSASYKVMTRSSHQSLVIKLMPNITLLNNCTRVEIAEYRRLLRTVLEPIRDALNAMTQNIRPVQSVASSRRHKRFAGVVLAGAALGVATAAQITAGIALHQSMLNSQAIDNLRASLETTNQAIEAIRQAGQEMILAVQGVQDYINNELIPSMNQLSCDLIGQKLGLKLLRYYTEILSLFGPSLRDPISAEISIQALSYALGGDINKVLEKLGYSGGDLLGILESRGIKARITHVDTESYFIVLSIAYPTLSEIKGVIVHRLEGVSYNIGSQEWYTTVPKYVATQGYLISNFDESSCTFMPEGTVCSQNALYPMSPLLQECLRGSTKSCARTLVSGSFGNRFILSQGNLIANCASILCKCYTTGTIINQDPDKILTYIAADHCPVVEVNGVTIQVGSRRYPDAVYLHRIDLGPPISLERLDVGTNLGNAIAKLEDAKELLESSDQILRSMKGLSSTSIVYILIAVCLGGLIGIPALICCCRGRCNKKGEQVGMSRPGLKPDLTGTSKSYVRSL</sequence>
<dbReference type="EMBL" id="AB016162">
    <property type="protein sequence ID" value="BAA34981.1"/>
    <property type="molecule type" value="Genomic_RNA"/>
</dbReference>
<dbReference type="RefSeq" id="NP_056922.1">
    <property type="nucleotide sequence ID" value="NC_001498.1"/>
</dbReference>
<dbReference type="PDB" id="5YXW">
    <property type="method" value="X-ray"/>
    <property type="resolution" value="2.78 A"/>
    <property type="chains" value="A=20-112, B=113-494"/>
</dbReference>
<dbReference type="PDB" id="5YZC">
    <property type="method" value="X-ray"/>
    <property type="resolution" value="2.33 A"/>
    <property type="chains" value="A=20-112, B=113-494"/>
</dbReference>
<dbReference type="PDB" id="5YZD">
    <property type="method" value="X-ray"/>
    <property type="resolution" value="2.64 A"/>
    <property type="chains" value="A=20-112, C=113-494"/>
</dbReference>
<dbReference type="PDB" id="8UT2">
    <property type="method" value="EM"/>
    <property type="resolution" value="2.56 A"/>
    <property type="chains" value="A/C/E=1-112, B/D/F=113-495"/>
</dbReference>
<dbReference type="PDB" id="8UTF">
    <property type="method" value="EM"/>
    <property type="resolution" value="2.73 A"/>
    <property type="chains" value="A/B/C=1-112, a/b/c=113-495"/>
</dbReference>
<dbReference type="PDB" id="8UUP">
    <property type="method" value="EM"/>
    <property type="resolution" value="2.11 A"/>
    <property type="chains" value="A/C/E=1-112, B/D/F=113-495"/>
</dbReference>
<dbReference type="PDB" id="8UUQ">
    <property type="method" value="EM"/>
    <property type="resolution" value="2.34 A"/>
    <property type="chains" value="A/D/F=1-112, C/E/G=113-495"/>
</dbReference>
<dbReference type="PDB" id="9AT8">
    <property type="method" value="EM"/>
    <property type="resolution" value="3.60 A"/>
    <property type="chains" value="E/F=1-495"/>
</dbReference>
<dbReference type="PDBsum" id="5YXW"/>
<dbReference type="PDBsum" id="5YZC"/>
<dbReference type="PDBsum" id="5YZD"/>
<dbReference type="PDBsum" id="8UT2"/>
<dbReference type="PDBsum" id="8UTF"/>
<dbReference type="PDBsum" id="8UUP"/>
<dbReference type="PDBsum" id="8UUQ"/>
<dbReference type="PDBsum" id="9AT8"/>
<dbReference type="EMDB" id="EMD-42527"/>
<dbReference type="EMDB" id="EMD-42539"/>
<dbReference type="EMDB" id="EMD-42593"/>
<dbReference type="EMDB" id="EMD-42595"/>
<dbReference type="SMR" id="Q786F3"/>
<dbReference type="GlyCosmos" id="Q786F3">
    <property type="glycosylation" value="3 sites, No reported glycans"/>
</dbReference>
<dbReference type="iPTMnet" id="Q786F3"/>
<dbReference type="GeneID" id="1489800"/>
<dbReference type="KEGG" id="vg:1489800"/>
<dbReference type="Proteomes" id="UP000008699">
    <property type="component" value="Segment"/>
</dbReference>
<dbReference type="GO" id="GO:0020002">
    <property type="term" value="C:host cell plasma membrane"/>
    <property type="evidence" value="ECO:0007669"/>
    <property type="project" value="UniProtKB-SubCell"/>
</dbReference>
<dbReference type="GO" id="GO:0016020">
    <property type="term" value="C:membrane"/>
    <property type="evidence" value="ECO:0007669"/>
    <property type="project" value="UniProtKB-KW"/>
</dbReference>
<dbReference type="GO" id="GO:0019031">
    <property type="term" value="C:viral envelope"/>
    <property type="evidence" value="ECO:0007669"/>
    <property type="project" value="UniProtKB-KW"/>
</dbReference>
<dbReference type="GO" id="GO:0055036">
    <property type="term" value="C:virion membrane"/>
    <property type="evidence" value="ECO:0007669"/>
    <property type="project" value="UniProtKB-SubCell"/>
</dbReference>
<dbReference type="GO" id="GO:0019064">
    <property type="term" value="P:fusion of virus membrane with host plasma membrane"/>
    <property type="evidence" value="ECO:0000314"/>
    <property type="project" value="UniProtKB"/>
</dbReference>
<dbReference type="GO" id="GO:0046718">
    <property type="term" value="P:symbiont entry into host cell"/>
    <property type="evidence" value="ECO:0007669"/>
    <property type="project" value="UniProtKB-KW"/>
</dbReference>
<dbReference type="Gene3D" id="1.10.287.2480">
    <property type="match status" value="1"/>
</dbReference>
<dbReference type="Gene3D" id="6.10.10.110">
    <property type="match status" value="1"/>
</dbReference>
<dbReference type="Gene3D" id="2.60.40.1690">
    <property type="entry name" value="Head and neck region of the ectodomain of NDV fusion glycoprotein"/>
    <property type="match status" value="1"/>
</dbReference>
<dbReference type="Gene3D" id="2.40.490.10">
    <property type="entry name" value="Newcastle disease virus like domain"/>
    <property type="match status" value="1"/>
</dbReference>
<dbReference type="InterPro" id="IPR000776">
    <property type="entry name" value="Fusion_F0_Paramyxovir"/>
</dbReference>
<dbReference type="Pfam" id="PF00523">
    <property type="entry name" value="Fusion_gly"/>
    <property type="match status" value="1"/>
</dbReference>
<dbReference type="SUPFAM" id="SSF69922">
    <property type="entry name" value="Head and neck region of the ectodomain of NDV fusion glycoprotein"/>
    <property type="match status" value="1"/>
</dbReference>
<dbReference type="SUPFAM" id="SSF58069">
    <property type="entry name" value="Virus ectodomain"/>
    <property type="match status" value="1"/>
</dbReference>
<organismHost>
    <name type="scientific">Homo sapiens</name>
    <name type="common">Human</name>
    <dbReference type="NCBI Taxonomy" id="9606"/>
</organismHost>
<evidence type="ECO:0000250" key="1"/>
<evidence type="ECO:0000255" key="2"/>
<evidence type="ECO:0000269" key="3">
    <source>
    </source>
</evidence>
<evidence type="ECO:0000269" key="4">
    <source>
    </source>
</evidence>
<evidence type="ECO:0000269" key="5">
    <source>
    </source>
</evidence>
<evidence type="ECO:0000269" key="6">
    <source>
    </source>
</evidence>
<evidence type="ECO:0000269" key="7">
    <source>
    </source>
</evidence>
<evidence type="ECO:0000269" key="8">
    <source>
    </source>
</evidence>
<evidence type="ECO:0000269" key="9">
    <source>
    </source>
</evidence>
<evidence type="ECO:0000305" key="10"/>
<evidence type="ECO:0000305" key="11">
    <source>
    </source>
</evidence>
<evidence type="ECO:0007744" key="12">
    <source>
        <dbReference type="PDB" id="5YXW"/>
    </source>
</evidence>
<evidence type="ECO:0007744" key="13">
    <source>
        <dbReference type="PDB" id="5YZC"/>
    </source>
</evidence>
<evidence type="ECO:0007744" key="14">
    <source>
        <dbReference type="PDB" id="5YZD"/>
    </source>
</evidence>
<evidence type="ECO:0007744" key="15">
    <source>
        <dbReference type="PDB" id="8UT2"/>
    </source>
</evidence>
<evidence type="ECO:0007744" key="16">
    <source>
        <dbReference type="PDB" id="8UTF"/>
    </source>
</evidence>
<evidence type="ECO:0007744" key="17">
    <source>
        <dbReference type="PDB" id="8UUP"/>
    </source>
</evidence>
<evidence type="ECO:0007744" key="18">
    <source>
        <dbReference type="PDB" id="8UUQ"/>
    </source>
</evidence>
<evidence type="ECO:0007744" key="19">
    <source>
        <dbReference type="PDB" id="9AT8"/>
    </source>
</evidence>
<evidence type="ECO:0007829" key="20">
    <source>
        <dbReference type="PDB" id="5YXW"/>
    </source>
</evidence>
<evidence type="ECO:0007829" key="21">
    <source>
        <dbReference type="PDB" id="5YZC"/>
    </source>
</evidence>
<evidence type="ECO:0007829" key="22">
    <source>
        <dbReference type="PDB" id="8UT2"/>
    </source>
</evidence>
<evidence type="ECO:0007829" key="23">
    <source>
        <dbReference type="PDB" id="8UUP"/>
    </source>
</evidence>
<proteinExistence type="evidence at protein level"/>
<protein>
    <recommendedName>
        <fullName>Fusion glycoprotein F0</fullName>
    </recommendedName>
    <component>
        <recommendedName>
            <fullName>Fusion glycoprotein F2</fullName>
        </recommendedName>
    </component>
    <component>
        <recommendedName>
            <fullName>Fusion glycoprotein F1</fullName>
        </recommendedName>
    </component>
</protein>
<gene>
    <name type="primary">F</name>
</gene>
<organism>
    <name type="scientific">Measles virus (strain Ichinose-B95a)</name>
    <name type="common">MeV</name>
    <name type="synonym">Subacute sclerose panencephalitis virus</name>
    <dbReference type="NCBI Taxonomy" id="645098"/>
    <lineage>
        <taxon>Viruses</taxon>
        <taxon>Riboviria</taxon>
        <taxon>Orthornavirae</taxon>
        <taxon>Negarnaviricota</taxon>
        <taxon>Haploviricotina</taxon>
        <taxon>Monjiviricetes</taxon>
        <taxon>Mononegavirales</taxon>
        <taxon>Paramyxoviridae</taxon>
        <taxon>Orthoparamyxovirinae</taxon>
        <taxon>Morbillivirus</taxon>
        <taxon>Morbillivirus hominis</taxon>
        <taxon>Measles morbillivirus</taxon>
    </lineage>
</organism>
<comment type="function">
    <text evidence="1 4 6 11">Class I viral fusion protein (Probable). Under the current model, the protein has at least 3 conformational states: pre-fusion native state, pre-hairpin intermediate state, and post-fusion hairpin state (PubMed:29463726). During viral and plasma cell membrane fusion, the heptad repeat (HR) regions assume a trimer-of-hairpins structure, positioning the fusion peptide in close proximity to the C-terminal region of the ectodomain. The formation of this structure appears to drive apposition and subsequent fusion of viral and plasma cell membranes. Directs fusion of viral and cellular membranes leading to delivery of the nucleocapsid into the cytoplasm. This fusion is pH independent and occurs directly at the outer cell membrane. During viral entry or virus-mediated fusion between infected cells and neighboring susceptible cells, the head domain of the H protein initially binds to its receptor and then the stalk region of the H protein transmits the fusion-triggering signal to the F protein (PubMed:23027974). Upon HN binding to its cellular receptor, the hydrophobic fusion peptide is unmasked and interacts with the cellular membrane, inducing the fusion between cell and virion membranes. Later in infection, F proteins expressed at the plasma membrane of infected cells could mediate fusion with adjacent cells to form syncytia, a cytopathic effect that could lead to tissue necrosis (By similarity).</text>
</comment>
<comment type="function">
    <text evidence="6 7">Some hyperfusogenic isolates can induce membrane fusion in SLAM- and nectin-4-negative cells and are linked to fatal subacute sclerosing panencephalitis (SSPE) or measles inclusion body encephalitis (MIBE). The neuropathogenicity is closely associated with enhanced propagation mediated by cell-to-cell fusion in the brain, which is principally regulated by hyperfusogenic mutations of the viral F protein (PubMed:33903248). Cell-to-cell transmission of the virus also occurs with hyperfusogenic isolates (PubMed:29463726).</text>
</comment>
<comment type="subunit">
    <text evidence="6">Homotrimer of disulfide-linked F1-F2.</text>
</comment>
<comment type="subcellular location">
    <subcellularLocation>
        <location evidence="1">Virion membrane</location>
        <topology evidence="1">Single-pass type I membrane protein</topology>
    </subcellularLocation>
    <subcellularLocation>
        <location evidence="1">Host cell membrane</location>
        <topology evidence="1">Single-pass membrane protein</topology>
    </subcellularLocation>
</comment>
<comment type="domain">
    <text evidence="7">Contains 3 heptad repreat regions, HRA, HRB and HRC.</text>
</comment>
<comment type="PTM">
    <text evidence="9">The inactive precursor F0 is glycosylated and proteolytically cleaved into F1 and F2 to be functionally active. The cleavage is mediated by host furin during the transport and maturation of the polypeptide.</text>
</comment>
<comment type="similarity">
    <text evidence="10">Belongs to the paramyxoviruses fusion glycoprotein family.</text>
</comment>